<sequence>MAELDIGQHCQVQHCRQRDFLPFVCDGCSGIFCLEHRSKDSHGCSEVNVVKERPKTDEHKSYSCSFKGCTDVELVAVICPYCEKNFCLRHRHQSDHDCEKLEVAKPRMAATQKLVRDIVDAKTGGAASKGRKGAKSSGTAAKVALMKLKMHADGDKSLPQTERTYFQVYLPKGSKEKSKAMFFCLRWSIGKVVDFAASLANLRNENNKLTAKKLRLCHVPSGEALPLDHTLERWITKEECPLYNGGNVILEYLNDEEQFLKNVDSYLE</sequence>
<protein>
    <recommendedName>
        <fullName evidence="4">AN1-type zinc finger protein 1</fullName>
    </recommendedName>
    <alternativeName>
        <fullName evidence="4">Zinc finger AN1-type-containing protein 1</fullName>
    </alternativeName>
</protein>
<evidence type="ECO:0000250" key="1">
    <source>
        <dbReference type="UniProtKB" id="Q8TCF1"/>
    </source>
</evidence>
<evidence type="ECO:0000255" key="2">
    <source>
        <dbReference type="PROSITE-ProRule" id="PRU00449"/>
    </source>
</evidence>
<evidence type="ECO:0000269" key="3">
    <source ref="4"/>
</evidence>
<evidence type="ECO:0000305" key="4"/>
<evidence type="ECO:0000312" key="5">
    <source>
        <dbReference type="MGI" id="MGI:1913611"/>
    </source>
</evidence>
<evidence type="ECO:0007744" key="6">
    <source>
        <dbReference type="PDB" id="1WFE"/>
    </source>
</evidence>
<evidence type="ECO:0007744" key="7">
    <source>
        <dbReference type="PDB" id="1WYS"/>
    </source>
</evidence>
<evidence type="ECO:0007829" key="8">
    <source>
        <dbReference type="PDB" id="1WFE"/>
    </source>
</evidence>
<evidence type="ECO:0007829" key="9">
    <source>
        <dbReference type="PDB" id="1WYS"/>
    </source>
</evidence>
<dbReference type="EMBL" id="AK009240">
    <property type="protein sequence ID" value="BAB26161.1"/>
    <property type="molecule type" value="mRNA"/>
</dbReference>
<dbReference type="EMBL" id="AK030472">
    <property type="protein sequence ID" value="BAC26977.1"/>
    <property type="molecule type" value="mRNA"/>
</dbReference>
<dbReference type="EMBL" id="AK077873">
    <property type="protein sequence ID" value="BAC37044.1"/>
    <property type="molecule type" value="mRNA"/>
</dbReference>
<dbReference type="EMBL" id="BC023352">
    <property type="protein sequence ID" value="AAH23352.1"/>
    <property type="molecule type" value="mRNA"/>
</dbReference>
<dbReference type="EMBL" id="BC046585">
    <property type="protein sequence ID" value="AAH46585.1"/>
    <property type="molecule type" value="mRNA"/>
</dbReference>
<dbReference type="EMBL" id="BC089494">
    <property type="protein sequence ID" value="AAH89494.1"/>
    <property type="molecule type" value="mRNA"/>
</dbReference>
<dbReference type="CCDS" id="CCDS17242.1"/>
<dbReference type="RefSeq" id="NP_001317942.1">
    <property type="nucleotide sequence ID" value="NM_001331013.1"/>
</dbReference>
<dbReference type="RefSeq" id="NP_001317943.1">
    <property type="nucleotide sequence ID" value="NM_001331014.1"/>
</dbReference>
<dbReference type="RefSeq" id="NP_001317944.1">
    <property type="nucleotide sequence ID" value="NM_001331015.1"/>
</dbReference>
<dbReference type="RefSeq" id="NP_079788.2">
    <property type="nucleotide sequence ID" value="NM_025512.3"/>
</dbReference>
<dbReference type="PDB" id="1WFE">
    <property type="method" value="NMR"/>
    <property type="chains" value="A=44-116"/>
</dbReference>
<dbReference type="PDB" id="1WYS">
    <property type="method" value="NMR"/>
    <property type="chains" value="A=1-62"/>
</dbReference>
<dbReference type="PDBsum" id="1WFE"/>
<dbReference type="PDBsum" id="1WYS"/>
<dbReference type="SMR" id="Q8BFR6"/>
<dbReference type="BioGRID" id="211413">
    <property type="interactions" value="1"/>
</dbReference>
<dbReference type="FunCoup" id="Q8BFR6">
    <property type="interactions" value="1282"/>
</dbReference>
<dbReference type="STRING" id="10090.ENSMUSP00000037459"/>
<dbReference type="iPTMnet" id="Q8BFR6"/>
<dbReference type="PhosphoSitePlus" id="Q8BFR6"/>
<dbReference type="SwissPalm" id="Q8BFR6"/>
<dbReference type="PaxDb" id="10090-ENSMUSP00000037459"/>
<dbReference type="ProteomicsDB" id="275061"/>
<dbReference type="Pumba" id="Q8BFR6"/>
<dbReference type="Antibodypedia" id="12557">
    <property type="antibodies" value="23 antibodies from 11 providers"/>
</dbReference>
<dbReference type="Ensembl" id="ENSMUST00000037839.12">
    <property type="protein sequence ID" value="ENSMUSP00000037459.6"/>
    <property type="gene ID" value="ENSMUSG00000039795.15"/>
</dbReference>
<dbReference type="GeneID" id="66361"/>
<dbReference type="KEGG" id="mmu:66361"/>
<dbReference type="UCSC" id="uc008ops.1">
    <property type="organism name" value="mouse"/>
</dbReference>
<dbReference type="AGR" id="MGI:1913611"/>
<dbReference type="CTD" id="79752"/>
<dbReference type="MGI" id="MGI:1913611">
    <property type="gene designation" value="Zfand1"/>
</dbReference>
<dbReference type="VEuPathDB" id="HostDB:ENSMUSG00000039795"/>
<dbReference type="eggNOG" id="KOG3183">
    <property type="taxonomic scope" value="Eukaryota"/>
</dbReference>
<dbReference type="GeneTree" id="ENSGT00730000111180"/>
<dbReference type="HOGENOM" id="CLU_052358_0_0_1"/>
<dbReference type="InParanoid" id="Q8BFR6"/>
<dbReference type="OMA" id="RQYCLKH"/>
<dbReference type="OrthoDB" id="431929at2759"/>
<dbReference type="PhylomeDB" id="Q8BFR6"/>
<dbReference type="TreeFam" id="TF314219"/>
<dbReference type="BioGRID-ORCS" id="66361">
    <property type="hits" value="3 hits in 77 CRISPR screens"/>
</dbReference>
<dbReference type="EvolutionaryTrace" id="Q8BFR6"/>
<dbReference type="PRO" id="PR:Q8BFR6"/>
<dbReference type="Proteomes" id="UP000000589">
    <property type="component" value="Chromosome 3"/>
</dbReference>
<dbReference type="RNAct" id="Q8BFR6">
    <property type="molecule type" value="protein"/>
</dbReference>
<dbReference type="Bgee" id="ENSMUSG00000039795">
    <property type="expression patterns" value="Expressed in embryonic brain and 67 other cell types or tissues"/>
</dbReference>
<dbReference type="ExpressionAtlas" id="Q8BFR6">
    <property type="expression patterns" value="baseline and differential"/>
</dbReference>
<dbReference type="GO" id="GO:0010494">
    <property type="term" value="C:cytoplasmic stress granule"/>
    <property type="evidence" value="ECO:0000250"/>
    <property type="project" value="UniProtKB"/>
</dbReference>
<dbReference type="GO" id="GO:0070628">
    <property type="term" value="F:proteasome binding"/>
    <property type="evidence" value="ECO:0000250"/>
    <property type="project" value="UniProtKB"/>
</dbReference>
<dbReference type="GO" id="GO:0008270">
    <property type="term" value="F:zinc ion binding"/>
    <property type="evidence" value="ECO:0007669"/>
    <property type="project" value="UniProtKB-KW"/>
</dbReference>
<dbReference type="GO" id="GO:1903843">
    <property type="term" value="P:cellular response to arsenite ion"/>
    <property type="evidence" value="ECO:0000250"/>
    <property type="project" value="UniProtKB"/>
</dbReference>
<dbReference type="GO" id="GO:0090316">
    <property type="term" value="P:positive regulation of intracellular protein transport"/>
    <property type="evidence" value="ECO:0000250"/>
    <property type="project" value="UniProtKB"/>
</dbReference>
<dbReference type="GO" id="GO:0035617">
    <property type="term" value="P:stress granule disassembly"/>
    <property type="evidence" value="ECO:0000250"/>
    <property type="project" value="UniProtKB"/>
</dbReference>
<dbReference type="FunFam" id="4.10.1110.10:FF:000005">
    <property type="entry name" value="Zinc finger AN1-type containing 1"/>
    <property type="match status" value="1"/>
</dbReference>
<dbReference type="FunFam" id="4.10.1110.10:FF:000006">
    <property type="entry name" value="Zinc finger AN1-type containing 1"/>
    <property type="match status" value="1"/>
</dbReference>
<dbReference type="Gene3D" id="4.10.1110.10">
    <property type="entry name" value="AN1-like Zinc finger"/>
    <property type="match status" value="2"/>
</dbReference>
<dbReference type="InterPro" id="IPR035896">
    <property type="entry name" value="AN1-like_Znf"/>
</dbReference>
<dbReference type="InterPro" id="IPR000058">
    <property type="entry name" value="Znf_AN1"/>
</dbReference>
<dbReference type="PANTHER" id="PTHR14677:SF37">
    <property type="entry name" value="AN1-TYPE ZINC FINGER PROTEIN 1"/>
    <property type="match status" value="1"/>
</dbReference>
<dbReference type="PANTHER" id="PTHR14677">
    <property type="entry name" value="ARSENITE INDUCUBLE RNA ASSOCIATED PROTEIN AIP-1-RELATED"/>
    <property type="match status" value="1"/>
</dbReference>
<dbReference type="Pfam" id="PF25327">
    <property type="entry name" value="UBL_ZFAND1"/>
    <property type="match status" value="1"/>
</dbReference>
<dbReference type="Pfam" id="PF01428">
    <property type="entry name" value="zf-AN1"/>
    <property type="match status" value="2"/>
</dbReference>
<dbReference type="SMART" id="SM00154">
    <property type="entry name" value="ZnF_AN1"/>
    <property type="match status" value="2"/>
</dbReference>
<dbReference type="SUPFAM" id="SSF118310">
    <property type="entry name" value="AN1-like Zinc finger"/>
    <property type="match status" value="2"/>
</dbReference>
<dbReference type="PROSITE" id="PS51039">
    <property type="entry name" value="ZF_AN1"/>
    <property type="match status" value="2"/>
</dbReference>
<name>ZFAN1_MOUSE</name>
<reference key="1">
    <citation type="journal article" date="2005" name="Science">
        <title>The transcriptional landscape of the mammalian genome.</title>
        <authorList>
            <person name="Carninci P."/>
            <person name="Kasukawa T."/>
            <person name="Katayama S."/>
            <person name="Gough J."/>
            <person name="Frith M.C."/>
            <person name="Maeda N."/>
            <person name="Oyama R."/>
            <person name="Ravasi T."/>
            <person name="Lenhard B."/>
            <person name="Wells C."/>
            <person name="Kodzius R."/>
            <person name="Shimokawa K."/>
            <person name="Bajic V.B."/>
            <person name="Brenner S.E."/>
            <person name="Batalov S."/>
            <person name="Forrest A.R."/>
            <person name="Zavolan M."/>
            <person name="Davis M.J."/>
            <person name="Wilming L.G."/>
            <person name="Aidinis V."/>
            <person name="Allen J.E."/>
            <person name="Ambesi-Impiombato A."/>
            <person name="Apweiler R."/>
            <person name="Aturaliya R.N."/>
            <person name="Bailey T.L."/>
            <person name="Bansal M."/>
            <person name="Baxter L."/>
            <person name="Beisel K.W."/>
            <person name="Bersano T."/>
            <person name="Bono H."/>
            <person name="Chalk A.M."/>
            <person name="Chiu K.P."/>
            <person name="Choudhary V."/>
            <person name="Christoffels A."/>
            <person name="Clutterbuck D.R."/>
            <person name="Crowe M.L."/>
            <person name="Dalla E."/>
            <person name="Dalrymple B.P."/>
            <person name="de Bono B."/>
            <person name="Della Gatta G."/>
            <person name="di Bernardo D."/>
            <person name="Down T."/>
            <person name="Engstrom P."/>
            <person name="Fagiolini M."/>
            <person name="Faulkner G."/>
            <person name="Fletcher C.F."/>
            <person name="Fukushima T."/>
            <person name="Furuno M."/>
            <person name="Futaki S."/>
            <person name="Gariboldi M."/>
            <person name="Georgii-Hemming P."/>
            <person name="Gingeras T.R."/>
            <person name="Gojobori T."/>
            <person name="Green R.E."/>
            <person name="Gustincich S."/>
            <person name="Harbers M."/>
            <person name="Hayashi Y."/>
            <person name="Hensch T.K."/>
            <person name="Hirokawa N."/>
            <person name="Hill D."/>
            <person name="Huminiecki L."/>
            <person name="Iacono M."/>
            <person name="Ikeo K."/>
            <person name="Iwama A."/>
            <person name="Ishikawa T."/>
            <person name="Jakt M."/>
            <person name="Kanapin A."/>
            <person name="Katoh M."/>
            <person name="Kawasawa Y."/>
            <person name="Kelso J."/>
            <person name="Kitamura H."/>
            <person name="Kitano H."/>
            <person name="Kollias G."/>
            <person name="Krishnan S.P."/>
            <person name="Kruger A."/>
            <person name="Kummerfeld S.K."/>
            <person name="Kurochkin I.V."/>
            <person name="Lareau L.F."/>
            <person name="Lazarevic D."/>
            <person name="Lipovich L."/>
            <person name="Liu J."/>
            <person name="Liuni S."/>
            <person name="McWilliam S."/>
            <person name="Madan Babu M."/>
            <person name="Madera M."/>
            <person name="Marchionni L."/>
            <person name="Matsuda H."/>
            <person name="Matsuzawa S."/>
            <person name="Miki H."/>
            <person name="Mignone F."/>
            <person name="Miyake S."/>
            <person name="Morris K."/>
            <person name="Mottagui-Tabar S."/>
            <person name="Mulder N."/>
            <person name="Nakano N."/>
            <person name="Nakauchi H."/>
            <person name="Ng P."/>
            <person name="Nilsson R."/>
            <person name="Nishiguchi S."/>
            <person name="Nishikawa S."/>
            <person name="Nori F."/>
            <person name="Ohara O."/>
            <person name="Okazaki Y."/>
            <person name="Orlando V."/>
            <person name="Pang K.C."/>
            <person name="Pavan W.J."/>
            <person name="Pavesi G."/>
            <person name="Pesole G."/>
            <person name="Petrovsky N."/>
            <person name="Piazza S."/>
            <person name="Reed J."/>
            <person name="Reid J.F."/>
            <person name="Ring B.Z."/>
            <person name="Ringwald M."/>
            <person name="Rost B."/>
            <person name="Ruan Y."/>
            <person name="Salzberg S.L."/>
            <person name="Sandelin A."/>
            <person name="Schneider C."/>
            <person name="Schoenbach C."/>
            <person name="Sekiguchi K."/>
            <person name="Semple C.A."/>
            <person name="Seno S."/>
            <person name="Sessa L."/>
            <person name="Sheng Y."/>
            <person name="Shibata Y."/>
            <person name="Shimada H."/>
            <person name="Shimada K."/>
            <person name="Silva D."/>
            <person name="Sinclair B."/>
            <person name="Sperling S."/>
            <person name="Stupka E."/>
            <person name="Sugiura K."/>
            <person name="Sultana R."/>
            <person name="Takenaka Y."/>
            <person name="Taki K."/>
            <person name="Tammoja K."/>
            <person name="Tan S.L."/>
            <person name="Tang S."/>
            <person name="Taylor M.S."/>
            <person name="Tegner J."/>
            <person name="Teichmann S.A."/>
            <person name="Ueda H.R."/>
            <person name="van Nimwegen E."/>
            <person name="Verardo R."/>
            <person name="Wei C.L."/>
            <person name="Yagi K."/>
            <person name="Yamanishi H."/>
            <person name="Zabarovsky E."/>
            <person name="Zhu S."/>
            <person name="Zimmer A."/>
            <person name="Hide W."/>
            <person name="Bult C."/>
            <person name="Grimmond S.M."/>
            <person name="Teasdale R.D."/>
            <person name="Liu E.T."/>
            <person name="Brusic V."/>
            <person name="Quackenbush J."/>
            <person name="Wahlestedt C."/>
            <person name="Mattick J.S."/>
            <person name="Hume D.A."/>
            <person name="Kai C."/>
            <person name="Sasaki D."/>
            <person name="Tomaru Y."/>
            <person name="Fukuda S."/>
            <person name="Kanamori-Katayama M."/>
            <person name="Suzuki M."/>
            <person name="Aoki J."/>
            <person name="Arakawa T."/>
            <person name="Iida J."/>
            <person name="Imamura K."/>
            <person name="Itoh M."/>
            <person name="Kato T."/>
            <person name="Kawaji H."/>
            <person name="Kawagashira N."/>
            <person name="Kawashima T."/>
            <person name="Kojima M."/>
            <person name="Kondo S."/>
            <person name="Konno H."/>
            <person name="Nakano K."/>
            <person name="Ninomiya N."/>
            <person name="Nishio T."/>
            <person name="Okada M."/>
            <person name="Plessy C."/>
            <person name="Shibata K."/>
            <person name="Shiraki T."/>
            <person name="Suzuki S."/>
            <person name="Tagami M."/>
            <person name="Waki K."/>
            <person name="Watahiki A."/>
            <person name="Okamura-Oho Y."/>
            <person name="Suzuki H."/>
            <person name="Kawai J."/>
            <person name="Hayashizaki Y."/>
        </authorList>
    </citation>
    <scope>NUCLEOTIDE SEQUENCE [LARGE SCALE MRNA]</scope>
    <source>
        <strain>C57BL/6J</strain>
        <tissue>Forelimb</tissue>
        <tissue>Pituitary</tissue>
        <tissue>Tongue</tissue>
    </source>
</reference>
<reference key="2">
    <citation type="journal article" date="2004" name="Genome Res.">
        <title>The status, quality, and expansion of the NIH full-length cDNA project: the Mammalian Gene Collection (MGC).</title>
        <authorList>
            <consortium name="The MGC Project Team"/>
        </authorList>
    </citation>
    <scope>NUCLEOTIDE SEQUENCE [LARGE SCALE MRNA]</scope>
    <source>
        <tissue>Mammary gland</tissue>
        <tissue>Molar</tissue>
        <tissue>Olfactory epithelium</tissue>
    </source>
</reference>
<reference key="3">
    <citation type="journal article" date="2010" name="Cell">
        <title>A tissue-specific atlas of mouse protein phosphorylation and expression.</title>
        <authorList>
            <person name="Huttlin E.L."/>
            <person name="Jedrychowski M.P."/>
            <person name="Elias J.E."/>
            <person name="Goswami T."/>
            <person name="Rad R."/>
            <person name="Beausoleil S.A."/>
            <person name="Villen J."/>
            <person name="Haas W."/>
            <person name="Sowa M.E."/>
            <person name="Gygi S.P."/>
        </authorList>
    </citation>
    <scope>IDENTIFICATION BY MASS SPECTROMETRY [LARGE SCALE ANALYSIS]</scope>
    <source>
        <tissue>Brown adipose tissue</tissue>
        <tissue>Kidney</tissue>
        <tissue>Liver</tissue>
        <tissue>Spleen</tissue>
    </source>
</reference>
<reference key="4">
    <citation type="submission" date="2005-08" db="PDB data bank">
        <title>Solution structure of the first and second ZF-AN1 domains of mouse RIKEN cDNA 2310008M20 protein.</title>
        <authorList>
            <consortium name="RIKEN structural genomics initiative (RSGI)"/>
        </authorList>
    </citation>
    <scope>STRUCTURE BY NMR OF 1-116 IN COMPLEX WITH ZINC IONS</scope>
</reference>
<accession>Q8BFR6</accession>
<accession>Q8R3Y6</accession>
<accession>Q9D7H5</accession>
<gene>
    <name evidence="5" type="primary">Zfand1</name>
</gene>
<feature type="initiator methionine" description="Removed" evidence="1">
    <location>
        <position position="1"/>
    </location>
</feature>
<feature type="chain" id="PRO_0000066581" description="AN1-type zinc finger protein 1">
    <location>
        <begin position="2"/>
        <end position="268"/>
    </location>
</feature>
<feature type="zinc finger region" description="AN1-type 1" evidence="2">
    <location>
        <begin position="4"/>
        <end position="52"/>
    </location>
</feature>
<feature type="zinc finger region" description="AN1-type 2" evidence="2">
    <location>
        <begin position="58"/>
        <end position="106"/>
    </location>
</feature>
<feature type="region of interest" description="ubiquitin-like" evidence="1">
    <location>
        <begin position="160"/>
        <end position="260"/>
    </location>
</feature>
<feature type="binding site" evidence="2">
    <location>
        <position position="10"/>
    </location>
    <ligand>
        <name>Zn(2+)</name>
        <dbReference type="ChEBI" id="CHEBI:29105"/>
        <label>1</label>
    </ligand>
</feature>
<feature type="binding site" evidence="2">
    <location>
        <position position="15"/>
    </location>
    <ligand>
        <name>Zn(2+)</name>
        <dbReference type="ChEBI" id="CHEBI:29105"/>
        <label>1</label>
    </ligand>
</feature>
<feature type="binding site" evidence="2">
    <location>
        <position position="25"/>
    </location>
    <ligand>
        <name>Zn(2+)</name>
        <dbReference type="ChEBI" id="CHEBI:29105"/>
        <label>2</label>
    </ligand>
</feature>
<feature type="binding site" evidence="2">
    <location>
        <position position="28"/>
    </location>
    <ligand>
        <name>Zn(2+)</name>
        <dbReference type="ChEBI" id="CHEBI:29105"/>
        <label>2</label>
    </ligand>
</feature>
<feature type="binding site" evidence="2">
    <location>
        <position position="33"/>
    </location>
    <ligand>
        <name>Zn(2+)</name>
        <dbReference type="ChEBI" id="CHEBI:29105"/>
        <label>1</label>
    </ligand>
</feature>
<feature type="binding site" evidence="2">
    <location>
        <position position="36"/>
    </location>
    <ligand>
        <name>Zn(2+)</name>
        <dbReference type="ChEBI" id="CHEBI:29105"/>
        <label>1</label>
    </ligand>
</feature>
<feature type="binding site" evidence="2">
    <location>
        <position position="42"/>
    </location>
    <ligand>
        <name>Zn(2+)</name>
        <dbReference type="ChEBI" id="CHEBI:29105"/>
        <label>2</label>
    </ligand>
</feature>
<feature type="binding site" evidence="2">
    <location>
        <position position="44"/>
    </location>
    <ligand>
        <name>Zn(2+)</name>
        <dbReference type="ChEBI" id="CHEBI:29105"/>
        <label>2</label>
    </ligand>
</feature>
<feature type="binding site" evidence="2 3 6 7">
    <location>
        <position position="64"/>
    </location>
    <ligand>
        <name>Zn(2+)</name>
        <dbReference type="ChEBI" id="CHEBI:29105"/>
        <label>3</label>
    </ligand>
</feature>
<feature type="binding site" evidence="2 3 6 7">
    <location>
        <position position="69"/>
    </location>
    <ligand>
        <name>Zn(2+)</name>
        <dbReference type="ChEBI" id="CHEBI:29105"/>
        <label>3</label>
    </ligand>
</feature>
<feature type="binding site" evidence="2 3 6 7">
    <location>
        <position position="79"/>
    </location>
    <ligand>
        <name>Zn(2+)</name>
        <dbReference type="ChEBI" id="CHEBI:29105"/>
        <label>4</label>
    </ligand>
</feature>
<feature type="binding site" evidence="2 3 6 7">
    <location>
        <position position="82"/>
    </location>
    <ligand>
        <name>Zn(2+)</name>
        <dbReference type="ChEBI" id="CHEBI:29105"/>
        <label>4</label>
    </ligand>
</feature>
<feature type="binding site" evidence="2 3 6 7">
    <location>
        <position position="87"/>
    </location>
    <ligand>
        <name>Zn(2+)</name>
        <dbReference type="ChEBI" id="CHEBI:29105"/>
        <label>3</label>
    </ligand>
</feature>
<feature type="binding site" evidence="2 3 6 7">
    <location>
        <position position="90"/>
    </location>
    <ligand>
        <name>Zn(2+)</name>
        <dbReference type="ChEBI" id="CHEBI:29105"/>
        <label>3</label>
    </ligand>
</feature>
<feature type="binding site" evidence="2 3 6 7">
    <location>
        <position position="96"/>
    </location>
    <ligand>
        <name>Zn(2+)</name>
        <dbReference type="ChEBI" id="CHEBI:29105"/>
        <label>4</label>
    </ligand>
</feature>
<feature type="binding site" evidence="2 3 6 7">
    <location>
        <position position="98"/>
    </location>
    <ligand>
        <name>Zn(2+)</name>
        <dbReference type="ChEBI" id="CHEBI:29105"/>
        <label>4</label>
    </ligand>
</feature>
<feature type="modified residue" description="N-acetylalanine" evidence="1">
    <location>
        <position position="2"/>
    </location>
</feature>
<feature type="sequence conflict" description="In Ref. 1; BAB26161." evidence="4" ref="1">
    <original>E</original>
    <variation>V</variation>
    <location>
        <position position="102"/>
    </location>
</feature>
<feature type="turn" evidence="9">
    <location>
        <begin position="13"/>
        <end position="15"/>
    </location>
</feature>
<feature type="turn" evidence="9">
    <location>
        <begin position="26"/>
        <end position="28"/>
    </location>
</feature>
<feature type="helix" evidence="9">
    <location>
        <begin position="40"/>
        <end position="42"/>
    </location>
</feature>
<feature type="strand" evidence="8">
    <location>
        <begin position="72"/>
        <end position="75"/>
    </location>
</feature>
<feature type="turn" evidence="8">
    <location>
        <begin position="80"/>
        <end position="82"/>
    </location>
</feature>
<feature type="helix" evidence="8">
    <location>
        <begin position="88"/>
        <end position="90"/>
    </location>
</feature>
<feature type="helix" evidence="8">
    <location>
        <begin position="94"/>
        <end position="96"/>
    </location>
</feature>
<feature type="strand" evidence="8">
    <location>
        <begin position="99"/>
        <end position="102"/>
    </location>
</feature>
<keyword id="KW-0002">3D-structure</keyword>
<keyword id="KW-0007">Acetylation</keyword>
<keyword id="KW-0963">Cytoplasm</keyword>
<keyword id="KW-0479">Metal-binding</keyword>
<keyword id="KW-1185">Reference proteome</keyword>
<keyword id="KW-0677">Repeat</keyword>
<keyword id="KW-0862">Zinc</keyword>
<keyword id="KW-0863">Zinc-finger</keyword>
<organism>
    <name type="scientific">Mus musculus</name>
    <name type="common">Mouse</name>
    <dbReference type="NCBI Taxonomy" id="10090"/>
    <lineage>
        <taxon>Eukaryota</taxon>
        <taxon>Metazoa</taxon>
        <taxon>Chordata</taxon>
        <taxon>Craniata</taxon>
        <taxon>Vertebrata</taxon>
        <taxon>Euteleostomi</taxon>
        <taxon>Mammalia</taxon>
        <taxon>Eutheria</taxon>
        <taxon>Euarchontoglires</taxon>
        <taxon>Glires</taxon>
        <taxon>Rodentia</taxon>
        <taxon>Myomorpha</taxon>
        <taxon>Muroidea</taxon>
        <taxon>Muridae</taxon>
        <taxon>Murinae</taxon>
        <taxon>Mus</taxon>
        <taxon>Mus</taxon>
    </lineage>
</organism>
<proteinExistence type="evidence at protein level"/>
<comment type="function">
    <text evidence="1">Plays a role in the regulation of cytoplasmic stress granules (SGs) turnover. SGs are dynamic and transient cytoplasmic ribonucleoprotein assemblies important for cellular protein homeostasis when protein production is suspended after acute exogenous stress. Associates with SGs and is involved in the efficient and specific arsenite-induced clearance process of SGs through the recruitment of the ubiquitin-selective ATPase VCP and the 26S proteasome. This process requires both complexes for efficient degradation of damaged ubiquitinated SG proteins during recovery from arsenite stress, and hence avoiding aberrant cytoplasmic SGs degradation via autophagy.</text>
</comment>
<comment type="subunit">
    <text evidence="1">Associates with the 26S proteasome; this association occurs upon exposure to arsenite and is reduced in the presence of ATP. Interacts (via AN1-type 1 and 2 zinc fingers) with PSMD1; this interaction is increased upon arsenite treatment and occurs in an ATP-independent manner. Interacts with PSMC4. Interacts with PSMA1. Interacts (via its ubiquitin-like region) with VCP; this interaction occurs in an arsenite-dependent manner and is necessary for the recruitment of the ubiquitin-selective ATPase VCP to stress granules (SGs).</text>
</comment>
<comment type="subcellular location">
    <subcellularLocation>
        <location evidence="1">Cytoplasm</location>
        <location evidence="1">Stress granule</location>
    </subcellularLocation>
    <text evidence="1">Colocalizes with TIA1, G3BP1, VCP and 26S proteasome in cytoplasmic stress granules (SGs) in response to arsenite-induced stress treatment in a VCP-independent manner. Not localized in SGs in response to other heat- oxidative- or osmotic-induced stress treatments. Colocalizes with VCP in cytoplasmic speckles.</text>
</comment>
<comment type="domain">
    <text evidence="1">The ubiquitin-like region is necessary for its localization to stress granules (SGs) in a VCP-independent manner. The AN1-type 1 and 2 zinc finger domains are necessary for the recruitment of the 26S proteasome to SGs. Both the AN1-type 1 and 2 zinc finger domains and the ubiquitin-like region are necessary for efficient SGs clearance upon specific arsenite-induced responses.</text>
</comment>